<proteinExistence type="evidence at protein level"/>
<name>SRC1_YEAST</name>
<feature type="chain" id="PRO_0000072188" description="Inner nuclear membrane protein SRC1">
    <location>
        <begin position="1"/>
        <end position="834"/>
    </location>
</feature>
<feature type="transmembrane region" description="Helical" evidence="1">
    <location>
        <begin position="455"/>
        <end position="475"/>
    </location>
</feature>
<feature type="transmembrane region" description="Helical" evidence="1">
    <location>
        <begin position="708"/>
        <end position="728"/>
    </location>
</feature>
<feature type="region of interest" description="Disordered" evidence="2">
    <location>
        <begin position="68"/>
        <end position="292"/>
    </location>
</feature>
<feature type="region of interest" description="Disordered" evidence="2">
    <location>
        <begin position="307"/>
        <end position="364"/>
    </location>
</feature>
<feature type="compositionally biased region" description="Low complexity" evidence="2">
    <location>
        <begin position="77"/>
        <end position="86"/>
    </location>
</feature>
<feature type="compositionally biased region" description="Acidic residues" evidence="2">
    <location>
        <begin position="114"/>
        <end position="127"/>
    </location>
</feature>
<feature type="compositionally biased region" description="Acidic residues" evidence="2">
    <location>
        <begin position="142"/>
        <end position="153"/>
    </location>
</feature>
<feature type="compositionally biased region" description="Polar residues" evidence="2">
    <location>
        <begin position="154"/>
        <end position="170"/>
    </location>
</feature>
<feature type="compositionally biased region" description="Basic and acidic residues" evidence="2">
    <location>
        <begin position="188"/>
        <end position="198"/>
    </location>
</feature>
<feature type="compositionally biased region" description="Polar residues" evidence="2">
    <location>
        <begin position="243"/>
        <end position="266"/>
    </location>
</feature>
<feature type="compositionally biased region" description="Low complexity" evidence="2">
    <location>
        <begin position="317"/>
        <end position="329"/>
    </location>
</feature>
<feature type="compositionally biased region" description="Low complexity" evidence="2">
    <location>
        <begin position="336"/>
        <end position="345"/>
    </location>
</feature>
<feature type="modified residue" description="Phosphoserine" evidence="8">
    <location>
        <position position="78"/>
    </location>
</feature>
<feature type="modified residue" description="Phosphoserine" evidence="6 8">
    <location>
        <position position="80"/>
    </location>
</feature>
<feature type="modified residue" description="Phosphoserine" evidence="6 8">
    <location>
        <position position="85"/>
    </location>
</feature>
<feature type="modified residue" description="Phosphoserine" evidence="8">
    <location>
        <position position="181"/>
    </location>
</feature>
<feature type="modified residue" description="Phosphoserine" evidence="8">
    <location>
        <position position="203"/>
    </location>
</feature>
<feature type="modified residue" description="Phosphoserine" evidence="6 8">
    <location>
        <position position="204"/>
    </location>
</feature>
<feature type="modified residue" description="Phosphoserine" evidence="6 8">
    <location>
        <position position="206"/>
    </location>
</feature>
<feature type="modified residue" description="Phosphoserine" evidence="7">
    <location>
        <position position="301"/>
    </location>
</feature>
<feature type="modified residue" description="Phosphothreonine" evidence="7 8">
    <location>
        <position position="394"/>
    </location>
</feature>
<feature type="modified residue" description="Phosphoserine" evidence="7">
    <location>
        <position position="427"/>
    </location>
</feature>
<dbReference type="EMBL" id="Z46659">
    <property type="protein sequence ID" value="CAA86621.1"/>
    <property type="status" value="ALT_SEQ"/>
    <property type="molecule type" value="Genomic_DNA"/>
</dbReference>
<dbReference type="EMBL" id="Z46659">
    <property type="protein sequence ID" value="CAA86622.1"/>
    <property type="status" value="ALT_SEQ"/>
    <property type="molecule type" value="Genomic_DNA"/>
</dbReference>
<dbReference type="EMBL" id="BK006946">
    <property type="protein sequence ID" value="DAA09865.1"/>
    <property type="molecule type" value="Genomic_DNA"/>
</dbReference>
<dbReference type="PIR" id="S49746">
    <property type="entry name" value="S49746"/>
</dbReference>
<dbReference type="RefSeq" id="NP_013679.1">
    <property type="nucleotide sequence ID" value="NM_001182391.1"/>
</dbReference>
<dbReference type="PDB" id="4XZR">
    <property type="method" value="X-ray"/>
    <property type="resolution" value="2.25 A"/>
    <property type="chains" value="A=170-223"/>
</dbReference>
<dbReference type="PDBsum" id="4XZR"/>
<dbReference type="SMR" id="Q03707"/>
<dbReference type="BioGRID" id="35136">
    <property type="interactions" value="276"/>
</dbReference>
<dbReference type="DIP" id="DIP-4546N"/>
<dbReference type="FunCoup" id="Q03707">
    <property type="interactions" value="71"/>
</dbReference>
<dbReference type="IntAct" id="Q03707">
    <property type="interactions" value="15"/>
</dbReference>
<dbReference type="MINT" id="Q03707"/>
<dbReference type="STRING" id="4932.YML034W"/>
<dbReference type="iPTMnet" id="Q03707"/>
<dbReference type="PaxDb" id="4932-YML034W"/>
<dbReference type="PeptideAtlas" id="Q03707"/>
<dbReference type="EnsemblFungi" id="YML034W_mRNA">
    <property type="protein sequence ID" value="YML034W"/>
    <property type="gene ID" value="YML034W"/>
</dbReference>
<dbReference type="GeneID" id="854974"/>
<dbReference type="KEGG" id="sce:YML034W"/>
<dbReference type="AGR" id="SGD:S000004497"/>
<dbReference type="SGD" id="S000004497">
    <property type="gene designation" value="SRC1"/>
</dbReference>
<dbReference type="VEuPathDB" id="FungiDB:YML034W"/>
<dbReference type="eggNOG" id="ENOG502QVG5">
    <property type="taxonomic scope" value="Eukaryota"/>
</dbReference>
<dbReference type="GeneTree" id="ENSGT00940000171142"/>
<dbReference type="HOGENOM" id="CLU_010838_0_0_1"/>
<dbReference type="InParanoid" id="Q03707"/>
<dbReference type="OMA" id="FCEIPEE"/>
<dbReference type="OrthoDB" id="2503928at2759"/>
<dbReference type="BioCyc" id="YEAST:G3O-32634-MONOMER"/>
<dbReference type="Reactome" id="R-SCE-9668328">
    <property type="pathway name" value="Sealing of the nuclear envelope (NE) by ESCRT-III"/>
</dbReference>
<dbReference type="BioGRID-ORCS" id="854974">
    <property type="hits" value="3 hits in 10 CRISPR screens"/>
</dbReference>
<dbReference type="PRO" id="PR:Q03707"/>
<dbReference type="Proteomes" id="UP000002311">
    <property type="component" value="Chromosome XIII"/>
</dbReference>
<dbReference type="RNAct" id="Q03707">
    <property type="molecule type" value="protein"/>
</dbReference>
<dbReference type="GO" id="GO:0005635">
    <property type="term" value="C:nuclear envelope"/>
    <property type="evidence" value="ECO:0000314"/>
    <property type="project" value="SGD"/>
</dbReference>
<dbReference type="GO" id="GO:0005637">
    <property type="term" value="C:nuclear inner membrane"/>
    <property type="evidence" value="ECO:0000318"/>
    <property type="project" value="GO_Central"/>
</dbReference>
<dbReference type="GO" id="GO:0034399">
    <property type="term" value="C:nuclear periphery"/>
    <property type="evidence" value="ECO:0007005"/>
    <property type="project" value="SGD"/>
</dbReference>
<dbReference type="GO" id="GO:0003682">
    <property type="term" value="F:chromatin binding"/>
    <property type="evidence" value="ECO:0007669"/>
    <property type="project" value="InterPro"/>
</dbReference>
<dbReference type="GO" id="GO:0034087">
    <property type="term" value="P:establishment of mitotic sister chromatid cohesion"/>
    <property type="evidence" value="ECO:0000316"/>
    <property type="project" value="SGD"/>
</dbReference>
<dbReference type="GO" id="GO:0043007">
    <property type="term" value="P:maintenance of rDNA"/>
    <property type="evidence" value="ECO:0000315"/>
    <property type="project" value="SGD"/>
</dbReference>
<dbReference type="GO" id="GO:0000070">
    <property type="term" value="P:mitotic sister chromatid segregation"/>
    <property type="evidence" value="ECO:0000316"/>
    <property type="project" value="SGD"/>
</dbReference>
<dbReference type="GO" id="GO:0071763">
    <property type="term" value="P:nuclear membrane organization"/>
    <property type="evidence" value="ECO:0000318"/>
    <property type="project" value="GO_Central"/>
</dbReference>
<dbReference type="CDD" id="cd12935">
    <property type="entry name" value="LEM_like"/>
    <property type="match status" value="1"/>
</dbReference>
<dbReference type="DisProt" id="DP02448"/>
<dbReference type="Gene3D" id="1.10.10.1180">
    <property type="entry name" value="MAN1, winged-helix domain"/>
    <property type="match status" value="1"/>
</dbReference>
<dbReference type="IDEAL" id="IID50325"/>
<dbReference type="InterPro" id="IPR025856">
    <property type="entry name" value="HeH/LEM_domain"/>
</dbReference>
<dbReference type="InterPro" id="IPR044780">
    <property type="entry name" value="Heh2/Src1"/>
</dbReference>
<dbReference type="InterPro" id="IPR018996">
    <property type="entry name" value="Man1/Src1-like_C"/>
</dbReference>
<dbReference type="InterPro" id="IPR041885">
    <property type="entry name" value="MAN1_winged_helix_dom"/>
</dbReference>
<dbReference type="PANTHER" id="PTHR47808">
    <property type="entry name" value="INNER NUCLEAR MEMBRANE PROTEIN HEH2-RELATED"/>
    <property type="match status" value="1"/>
</dbReference>
<dbReference type="PANTHER" id="PTHR47808:SF2">
    <property type="entry name" value="LEM DOMAIN-CONTAINING PROTEIN 2"/>
    <property type="match status" value="1"/>
</dbReference>
<dbReference type="Pfam" id="PF12949">
    <property type="entry name" value="HeH"/>
    <property type="match status" value="1"/>
</dbReference>
<dbReference type="Pfam" id="PF09402">
    <property type="entry name" value="MSC"/>
    <property type="match status" value="1"/>
</dbReference>
<accession>Q03707</accession>
<accession>D6VZE1</accession>
<accession>Q03712</accession>
<reference key="1">
    <citation type="journal article" date="1997" name="Nature">
        <title>The nucleotide sequence of Saccharomyces cerevisiae chromosome XIII.</title>
        <authorList>
            <person name="Bowman S."/>
            <person name="Churcher C.M."/>
            <person name="Badcock K."/>
            <person name="Brown D."/>
            <person name="Chillingworth T."/>
            <person name="Connor R."/>
            <person name="Dedman K."/>
            <person name="Devlin K."/>
            <person name="Gentles S."/>
            <person name="Hamlin N."/>
            <person name="Hunt S."/>
            <person name="Jagels K."/>
            <person name="Lye G."/>
            <person name="Moule S."/>
            <person name="Odell C."/>
            <person name="Pearson D."/>
            <person name="Rajandream M.A."/>
            <person name="Rice P."/>
            <person name="Skelton J."/>
            <person name="Walsh S.V."/>
            <person name="Whitehead S."/>
            <person name="Barrell B.G."/>
        </authorList>
    </citation>
    <scope>NUCLEOTIDE SEQUENCE [LARGE SCALE GENOMIC DNA]</scope>
    <source>
        <strain>ATCC 204508 / S288c</strain>
    </source>
</reference>
<reference key="2">
    <citation type="journal article" date="2014" name="G3 (Bethesda)">
        <title>The reference genome sequence of Saccharomyces cerevisiae: Then and now.</title>
        <authorList>
            <person name="Engel S.R."/>
            <person name="Dietrich F.S."/>
            <person name="Fisk D.G."/>
            <person name="Binkley G."/>
            <person name="Balakrishnan R."/>
            <person name="Costanzo M.C."/>
            <person name="Dwight S.S."/>
            <person name="Hitz B.C."/>
            <person name="Karra K."/>
            <person name="Nash R.S."/>
            <person name="Weng S."/>
            <person name="Wong E.D."/>
            <person name="Lloyd P."/>
            <person name="Skrzypek M.S."/>
            <person name="Miyasato S.R."/>
            <person name="Simison M."/>
            <person name="Cherry J.M."/>
        </authorList>
    </citation>
    <scope>GENOME REANNOTATION</scope>
    <source>
        <strain>ATCC 204508 / S288c</strain>
    </source>
</reference>
<reference key="3">
    <citation type="journal article" date="2002" name="Yeast">
        <title>SRC1: an intron-containing yeast gene involved in sister chromatid segregation.</title>
        <authorList>
            <person name="Rodriguez-Navarro S."/>
            <person name="Igual J.C."/>
            <person name="Perez-Ortin J.E."/>
        </authorList>
    </citation>
    <scope>FUNCTION</scope>
    <scope>IDENTIFICATION OF INTRON</scope>
</reference>
<reference key="4">
    <citation type="journal article" date="2006" name="Nature">
        <title>Karyopherin-mediated import of integral inner nuclear membrane proteins.</title>
        <authorList>
            <person name="King M.C."/>
            <person name="Lusk C.P."/>
            <person name="Blobel G."/>
        </authorList>
    </citation>
    <scope>SUBCELLULAR LOCATION</scope>
</reference>
<reference key="5">
    <citation type="journal article" date="2007" name="J. Proteome Res.">
        <title>Large-scale phosphorylation analysis of alpha-factor-arrested Saccharomyces cerevisiae.</title>
        <authorList>
            <person name="Li X."/>
            <person name="Gerber S.A."/>
            <person name="Rudner A.D."/>
            <person name="Beausoleil S.A."/>
            <person name="Haas W."/>
            <person name="Villen J."/>
            <person name="Elias J.E."/>
            <person name="Gygi S.P."/>
        </authorList>
    </citation>
    <scope>PHOSPHORYLATION [LARGE SCALE ANALYSIS] AT SER-80; SER-85; SER-204 AND SER-206</scope>
    <scope>IDENTIFICATION BY MASS SPECTROMETRY [LARGE SCALE ANALYSIS]</scope>
    <source>
        <strain>ADR376</strain>
    </source>
</reference>
<reference key="6">
    <citation type="journal article" date="2007" name="Proc. Natl. Acad. Sci. U.S.A.">
        <title>Analysis of phosphorylation sites on proteins from Saccharomyces cerevisiae by electron transfer dissociation (ETD) mass spectrometry.</title>
        <authorList>
            <person name="Chi A."/>
            <person name="Huttenhower C."/>
            <person name="Geer L.Y."/>
            <person name="Coon J.J."/>
            <person name="Syka J.E.P."/>
            <person name="Bai D.L."/>
            <person name="Shabanowitz J."/>
            <person name="Burke D.J."/>
            <person name="Troyanskaya O.G."/>
            <person name="Hunt D.F."/>
        </authorList>
    </citation>
    <scope>IDENTIFICATION BY MASS SPECTROMETRY [LARGE SCALE ANALYSIS]</scope>
</reference>
<reference key="7">
    <citation type="journal article" date="2008" name="Mol. Cell. Proteomics">
        <title>A multidimensional chromatography technology for in-depth phosphoproteome analysis.</title>
        <authorList>
            <person name="Albuquerque C.P."/>
            <person name="Smolka M.B."/>
            <person name="Payne S.H."/>
            <person name="Bafna V."/>
            <person name="Eng J."/>
            <person name="Zhou H."/>
        </authorList>
    </citation>
    <scope>PHOSPHORYLATION [LARGE SCALE ANALYSIS] AT SER-301; THR-394 AND SER-427</scope>
    <scope>IDENTIFICATION BY MASS SPECTROMETRY [LARGE SCALE ANALYSIS]</scope>
</reference>
<reference key="8">
    <citation type="journal article" date="2009" name="Science">
        <title>Global analysis of Cdk1 substrate phosphorylation sites provides insights into evolution.</title>
        <authorList>
            <person name="Holt L.J."/>
            <person name="Tuch B.B."/>
            <person name="Villen J."/>
            <person name="Johnson A.D."/>
            <person name="Gygi S.P."/>
            <person name="Morgan D.O."/>
        </authorList>
    </citation>
    <scope>PHOSPHORYLATION [LARGE SCALE ANALYSIS] AT SER-78; SER-80; SER-85; SER-181; SER-203; SER-204; SER-206 AND THR-394</scope>
    <scope>IDENTIFICATION BY MASS SPECTROMETRY [LARGE SCALE ANALYSIS]</scope>
</reference>
<reference key="9">
    <citation type="journal article" date="2012" name="Proc. Natl. Acad. Sci. U.S.A.">
        <title>N-terminal acetylome analyses and functional insights of the N-terminal acetyltransferase NatB.</title>
        <authorList>
            <person name="Van Damme P."/>
            <person name="Lasa M."/>
            <person name="Polevoda B."/>
            <person name="Gazquez C."/>
            <person name="Elosegui-Artola A."/>
            <person name="Kim D.S."/>
            <person name="De Juan-Pardo E."/>
            <person name="Demeyer K."/>
            <person name="Hole K."/>
            <person name="Larrea E."/>
            <person name="Timmerman E."/>
            <person name="Prieto J."/>
            <person name="Arnesen T."/>
            <person name="Sherman F."/>
            <person name="Gevaert K."/>
            <person name="Aldabe R."/>
        </authorList>
    </citation>
    <scope>IDENTIFICATION BY MASS SPECTROMETRY [LARGE SCALE ANALYSIS]</scope>
</reference>
<protein>
    <recommendedName>
        <fullName>Inner nuclear membrane protein SRC1</fullName>
    </recommendedName>
    <alternativeName>
        <fullName>Helix-extension-helix domain-containing protein 1</fullName>
    </alternativeName>
</protein>
<evidence type="ECO:0000255" key="1"/>
<evidence type="ECO:0000256" key="2">
    <source>
        <dbReference type="SAM" id="MobiDB-lite"/>
    </source>
</evidence>
<evidence type="ECO:0000269" key="3">
    <source>
    </source>
</evidence>
<evidence type="ECO:0000269" key="4">
    <source>
    </source>
</evidence>
<evidence type="ECO:0000305" key="5"/>
<evidence type="ECO:0007744" key="6">
    <source>
    </source>
</evidence>
<evidence type="ECO:0007744" key="7">
    <source>
    </source>
</evidence>
<evidence type="ECO:0007744" key="8">
    <source>
    </source>
</evidence>
<keyword id="KW-0002">3D-structure</keyword>
<keyword id="KW-0472">Membrane</keyword>
<keyword id="KW-0539">Nucleus</keyword>
<keyword id="KW-0597">Phosphoprotein</keyword>
<keyword id="KW-1185">Reference proteome</keyword>
<keyword id="KW-0812">Transmembrane</keyword>
<keyword id="KW-1133">Transmembrane helix</keyword>
<organism>
    <name type="scientific">Saccharomyces cerevisiae (strain ATCC 204508 / S288c)</name>
    <name type="common">Baker's yeast</name>
    <dbReference type="NCBI Taxonomy" id="559292"/>
    <lineage>
        <taxon>Eukaryota</taxon>
        <taxon>Fungi</taxon>
        <taxon>Dikarya</taxon>
        <taxon>Ascomycota</taxon>
        <taxon>Saccharomycotina</taxon>
        <taxon>Saccharomycetes</taxon>
        <taxon>Saccharomycetales</taxon>
        <taxon>Saccharomycetaceae</taxon>
        <taxon>Saccharomyces</taxon>
    </lineage>
</organism>
<gene>
    <name type="primary">SRC1</name>
    <name type="synonym">HEH1</name>
    <name type="ordered locus">YML034W</name>
    <name type="ORF">YML033W</name>
</gene>
<comment type="function">
    <text evidence="3">Plays a role in sister chromatid separation.</text>
</comment>
<comment type="interaction">
    <interactant intactId="EBI-18064">
        <id>Q03707</id>
    </interactant>
    <interactant intactId="EBI-35877">
        <id>Q12066</id>
        <label>NUR1</label>
    </interactant>
    <organismsDiffer>false</organismsDiffer>
    <experiments>2</experiments>
</comment>
<comment type="interaction">
    <interactant intactId="EBI-18064">
        <id>Q03707</id>
    </interactant>
    <interactant intactId="EBI-1797">
        <id>Q02821</id>
        <label>SRP1</label>
    </interactant>
    <organismsDiffer>false</organismsDiffer>
    <experiments>5</experiments>
</comment>
<comment type="subcellular location">
    <subcellularLocation>
        <location evidence="4">Nucleus inner membrane</location>
        <topology evidence="4">Multi-pass membrane protein</topology>
    </subcellularLocation>
    <text>Targeting to the inner nuclear membrane requires the SRP1 and KAP95 karyopherins and the Ran cycle.</text>
</comment>
<comment type="sequence caution" evidence="5">
    <conflict type="erroneous gene model prediction">
        <sequence resource="EMBL-CDS" id="CAA86621"/>
    </conflict>
</comment>
<comment type="sequence caution" evidence="5">
    <conflict type="erroneous gene model prediction">
        <sequence resource="EMBL-CDS" id="CAA86622"/>
    </conflict>
</comment>
<sequence length="834" mass="95498">MNSDLEYLEDGFDPNSMKVATLRRILVENNVDFPSNARKNALVGLFDEKVKPQIPQLRKMYLNVRPSDEGIVKMDRPSSSPSIASPRRSRRARREKSASPMAKQFKKNRILDDVSNDDDDDDDDDDDNDKKDDPLIVPSGTDTDEVDDEEDDVITSSSNKSDTNDFQQNSDTRKKRKDPDSDDWSESNSKENKIDNKHLNLLSSDSEIEQDYQKAKKRKTSDLNQEHGNGSAILGKLSVKTPIKNTNRKPVSMDNFNDSLTSSGTENDPFVPNIRHNPKELGTANGTGHSTPLSKLKVSASFADKLPQKEVPSTILVPEVEQQEPSQSERTPSLFSSEGSGSESEAPLLPEITTPGPHQPMGNTSNNVVEMIDTDSSNLVSDEDEVLVPTRIETPQLPTEKDVEKCEARVQELQEEVNEQLEHENGSEFDVKQGSGKVGNRHKFKRALKFLSKSLLALFLFCIFIVIPLLFGLWYREQRLLIGYCGHEVPSHRVSGNSFEFIQKLDNLLQDYRPKCIPCPPNGICYPYLKLKCKPDYKLAPSRLDFLEIIPAQGKCVKDDKKQQLVSEVVEKSLEFLRAKNAQISCGDGKDDIESGMTEDALYQIFNEARAPWIRDDEFEDLWIQVIKDLTEEPEILWRQLSPTDNNIGGNSNNIIKTNDVPRQKRHLPEKFISKTRNFRSTSKKYIGMKCRFEREIYQTYKKFQRPIWLMFLLIVISKVIEIKLKNYYRKKARIEELVTQTMEKLKFQKIKSMSDPKENAYLSIVQLRDIFLSDIVDLKYKNQLWSEVVKYLEHNNSNIKSNLTEIRGEIMKCWEWIGPMELNEPKDSAENKI</sequence>